<feature type="chain" id="PRO_1000115950" description="Probable GTP-binding protein EngB">
    <location>
        <begin position="1"/>
        <end position="212"/>
    </location>
</feature>
<feature type="domain" description="EngB-type G" evidence="1">
    <location>
        <begin position="23"/>
        <end position="197"/>
    </location>
</feature>
<feature type="binding site" evidence="1">
    <location>
        <begin position="31"/>
        <end position="38"/>
    </location>
    <ligand>
        <name>GTP</name>
        <dbReference type="ChEBI" id="CHEBI:37565"/>
    </ligand>
</feature>
<feature type="binding site" evidence="1">
    <location>
        <position position="38"/>
    </location>
    <ligand>
        <name>Mg(2+)</name>
        <dbReference type="ChEBI" id="CHEBI:18420"/>
    </ligand>
</feature>
<feature type="binding site" evidence="1">
    <location>
        <begin position="58"/>
        <end position="62"/>
    </location>
    <ligand>
        <name>GTP</name>
        <dbReference type="ChEBI" id="CHEBI:37565"/>
    </ligand>
</feature>
<feature type="binding site" evidence="1">
    <location>
        <position position="60"/>
    </location>
    <ligand>
        <name>Mg(2+)</name>
        <dbReference type="ChEBI" id="CHEBI:18420"/>
    </ligand>
</feature>
<feature type="binding site" evidence="1">
    <location>
        <begin position="76"/>
        <end position="79"/>
    </location>
    <ligand>
        <name>GTP</name>
        <dbReference type="ChEBI" id="CHEBI:37565"/>
    </ligand>
</feature>
<feature type="binding site" evidence="1">
    <location>
        <begin position="143"/>
        <end position="146"/>
    </location>
    <ligand>
        <name>GTP</name>
        <dbReference type="ChEBI" id="CHEBI:37565"/>
    </ligand>
</feature>
<feature type="binding site" evidence="1">
    <location>
        <begin position="176"/>
        <end position="178"/>
    </location>
    <ligand>
        <name>GTP</name>
        <dbReference type="ChEBI" id="CHEBI:37565"/>
    </ligand>
</feature>
<evidence type="ECO:0000255" key="1">
    <source>
        <dbReference type="HAMAP-Rule" id="MF_00321"/>
    </source>
</evidence>
<dbReference type="EMBL" id="CP001103">
    <property type="protein sequence ID" value="AEA96163.1"/>
    <property type="molecule type" value="Genomic_DNA"/>
</dbReference>
<dbReference type="SMR" id="B4S284"/>
<dbReference type="KEGG" id="amc:MADE_1000070"/>
<dbReference type="HOGENOM" id="CLU_033732_1_0_6"/>
<dbReference type="Proteomes" id="UP000001870">
    <property type="component" value="Chromosome"/>
</dbReference>
<dbReference type="GO" id="GO:0005829">
    <property type="term" value="C:cytosol"/>
    <property type="evidence" value="ECO:0007669"/>
    <property type="project" value="TreeGrafter"/>
</dbReference>
<dbReference type="GO" id="GO:0005525">
    <property type="term" value="F:GTP binding"/>
    <property type="evidence" value="ECO:0007669"/>
    <property type="project" value="UniProtKB-UniRule"/>
</dbReference>
<dbReference type="GO" id="GO:0046872">
    <property type="term" value="F:metal ion binding"/>
    <property type="evidence" value="ECO:0007669"/>
    <property type="project" value="UniProtKB-KW"/>
</dbReference>
<dbReference type="GO" id="GO:0000917">
    <property type="term" value="P:division septum assembly"/>
    <property type="evidence" value="ECO:0007669"/>
    <property type="project" value="UniProtKB-KW"/>
</dbReference>
<dbReference type="CDD" id="cd01876">
    <property type="entry name" value="YihA_EngB"/>
    <property type="match status" value="1"/>
</dbReference>
<dbReference type="FunFam" id="3.40.50.300:FF:000098">
    <property type="entry name" value="Probable GTP-binding protein EngB"/>
    <property type="match status" value="1"/>
</dbReference>
<dbReference type="Gene3D" id="3.40.50.300">
    <property type="entry name" value="P-loop containing nucleotide triphosphate hydrolases"/>
    <property type="match status" value="1"/>
</dbReference>
<dbReference type="HAMAP" id="MF_00321">
    <property type="entry name" value="GTPase_EngB"/>
    <property type="match status" value="1"/>
</dbReference>
<dbReference type="InterPro" id="IPR030393">
    <property type="entry name" value="G_ENGB_dom"/>
</dbReference>
<dbReference type="InterPro" id="IPR006073">
    <property type="entry name" value="GTP-bd"/>
</dbReference>
<dbReference type="InterPro" id="IPR019987">
    <property type="entry name" value="GTP-bd_ribosome_bio_YsxC"/>
</dbReference>
<dbReference type="InterPro" id="IPR027417">
    <property type="entry name" value="P-loop_NTPase"/>
</dbReference>
<dbReference type="NCBIfam" id="TIGR03598">
    <property type="entry name" value="GTPase_YsxC"/>
    <property type="match status" value="1"/>
</dbReference>
<dbReference type="PANTHER" id="PTHR11649:SF13">
    <property type="entry name" value="ENGB-TYPE G DOMAIN-CONTAINING PROTEIN"/>
    <property type="match status" value="1"/>
</dbReference>
<dbReference type="PANTHER" id="PTHR11649">
    <property type="entry name" value="MSS1/TRME-RELATED GTP-BINDING PROTEIN"/>
    <property type="match status" value="1"/>
</dbReference>
<dbReference type="Pfam" id="PF01926">
    <property type="entry name" value="MMR_HSR1"/>
    <property type="match status" value="1"/>
</dbReference>
<dbReference type="SUPFAM" id="SSF52540">
    <property type="entry name" value="P-loop containing nucleoside triphosphate hydrolases"/>
    <property type="match status" value="1"/>
</dbReference>
<dbReference type="PROSITE" id="PS51706">
    <property type="entry name" value="G_ENGB"/>
    <property type="match status" value="1"/>
</dbReference>
<sequence length="212" mass="23674">MSYYTKAKFFTSAPDIRHLKNDTGIEVAFAGRSNAGKSSALNTLTRQRNLARTSKTPGRTQLINVFELEEELRLVDLPGYGFAKVPVAMKKKWQASLGEYLQKRKSLKGLVVLMDIRHPFKDLDQDLIHWAVESNIPVLALLTKADKLKSGKRKAQLLMAQEAALAFMGDVTVQTFSSLNKHGLPELERILDGWFGLDKKSDEEGAVVEGQD</sequence>
<reference key="1">
    <citation type="journal article" date="2008" name="ISME J.">
        <title>Comparative genomics of two ecotypes of the marine planktonic copiotroph Alteromonas macleodii suggests alternative lifestyles associated with different kinds of particulate organic matter.</title>
        <authorList>
            <person name="Ivars-Martinez E."/>
            <person name="Martin-Cuadrado A.-B."/>
            <person name="D'Auria G."/>
            <person name="Mira A."/>
            <person name="Ferriera S."/>
            <person name="Johnson J."/>
            <person name="Friedman R."/>
            <person name="Rodriguez-Valera F."/>
        </authorList>
    </citation>
    <scope>NUCLEOTIDE SEQUENCE [LARGE SCALE GENOMIC DNA]</scope>
    <source>
        <strain>DSM 17117 / CIP 110805 / LMG 28347 / Deep ecotype</strain>
    </source>
</reference>
<gene>
    <name evidence="1" type="primary">engB</name>
    <name type="ordered locus">MADE_1000070</name>
</gene>
<name>ENGB_ALTMD</name>
<proteinExistence type="inferred from homology"/>
<keyword id="KW-0131">Cell cycle</keyword>
<keyword id="KW-0132">Cell division</keyword>
<keyword id="KW-0342">GTP-binding</keyword>
<keyword id="KW-0460">Magnesium</keyword>
<keyword id="KW-0479">Metal-binding</keyword>
<keyword id="KW-0547">Nucleotide-binding</keyword>
<keyword id="KW-0717">Septation</keyword>
<accession>B4S284</accession>
<accession>F2G1R6</accession>
<organism>
    <name type="scientific">Alteromonas mediterranea (strain DSM 17117 / CIP 110805 / LMG 28347 / Deep ecotype)</name>
    <dbReference type="NCBI Taxonomy" id="1774373"/>
    <lineage>
        <taxon>Bacteria</taxon>
        <taxon>Pseudomonadati</taxon>
        <taxon>Pseudomonadota</taxon>
        <taxon>Gammaproteobacteria</taxon>
        <taxon>Alteromonadales</taxon>
        <taxon>Alteromonadaceae</taxon>
        <taxon>Alteromonas/Salinimonas group</taxon>
        <taxon>Alteromonas</taxon>
    </lineage>
</organism>
<comment type="function">
    <text evidence="1">Necessary for normal cell division and for the maintenance of normal septation.</text>
</comment>
<comment type="cofactor">
    <cofactor evidence="1">
        <name>Mg(2+)</name>
        <dbReference type="ChEBI" id="CHEBI:18420"/>
    </cofactor>
</comment>
<comment type="similarity">
    <text evidence="1">Belongs to the TRAFAC class TrmE-Era-EngA-EngB-Septin-like GTPase superfamily. EngB GTPase family.</text>
</comment>
<protein>
    <recommendedName>
        <fullName evidence="1">Probable GTP-binding protein EngB</fullName>
    </recommendedName>
</protein>